<keyword id="KW-0963">Cytoplasm</keyword>
<keyword id="KW-1185">Reference proteome</keyword>
<keyword id="KW-0694">RNA-binding</keyword>
<keyword id="KW-0804">Transcription</keyword>
<keyword id="KW-0889">Transcription antitermination</keyword>
<keyword id="KW-0805">Transcription regulation</keyword>
<keyword id="KW-0806">Transcription termination</keyword>
<dbReference type="EMBL" id="L43967">
    <property type="protein sequence ID" value="AAC71359.1"/>
    <property type="molecule type" value="Genomic_DNA"/>
</dbReference>
<dbReference type="EMBL" id="U01778">
    <property type="protein sequence ID" value="AAD10598.1"/>
    <property type="molecule type" value="Genomic_DNA"/>
</dbReference>
<dbReference type="PIR" id="F64215">
    <property type="entry name" value="F64215"/>
</dbReference>
<dbReference type="RefSeq" id="WP_009885827.1">
    <property type="nucleotide sequence ID" value="NC_000908.2"/>
</dbReference>
<dbReference type="SMR" id="P47387"/>
<dbReference type="FunCoup" id="P47387">
    <property type="interactions" value="132"/>
</dbReference>
<dbReference type="STRING" id="243273.MG_141"/>
<dbReference type="GeneID" id="88282272"/>
<dbReference type="KEGG" id="mge:MG_141"/>
<dbReference type="eggNOG" id="COG0195">
    <property type="taxonomic scope" value="Bacteria"/>
</dbReference>
<dbReference type="HOGENOM" id="CLU_029242_2_2_14"/>
<dbReference type="InParanoid" id="P47387"/>
<dbReference type="OrthoDB" id="9807233at2"/>
<dbReference type="BioCyc" id="MGEN243273:G1GJ2-163-MONOMER"/>
<dbReference type="Proteomes" id="UP000000807">
    <property type="component" value="Chromosome"/>
</dbReference>
<dbReference type="GO" id="GO:0005829">
    <property type="term" value="C:cytosol"/>
    <property type="evidence" value="ECO:0000318"/>
    <property type="project" value="GO_Central"/>
</dbReference>
<dbReference type="GO" id="GO:0003700">
    <property type="term" value="F:DNA-binding transcription factor activity"/>
    <property type="evidence" value="ECO:0007669"/>
    <property type="project" value="InterPro"/>
</dbReference>
<dbReference type="GO" id="GO:0003723">
    <property type="term" value="F:RNA binding"/>
    <property type="evidence" value="ECO:0007669"/>
    <property type="project" value="UniProtKB-UniRule"/>
</dbReference>
<dbReference type="GO" id="GO:0006353">
    <property type="term" value="P:DNA-templated transcription termination"/>
    <property type="evidence" value="ECO:0007669"/>
    <property type="project" value="UniProtKB-UniRule"/>
</dbReference>
<dbReference type="GO" id="GO:0031564">
    <property type="term" value="P:transcription antitermination"/>
    <property type="evidence" value="ECO:0000318"/>
    <property type="project" value="GO_Central"/>
</dbReference>
<dbReference type="CDD" id="cd02134">
    <property type="entry name" value="KH-II_NusA_rpt1"/>
    <property type="match status" value="1"/>
</dbReference>
<dbReference type="CDD" id="cd22529">
    <property type="entry name" value="KH-II_NusA_rpt2"/>
    <property type="match status" value="1"/>
</dbReference>
<dbReference type="FunFam" id="3.30.300.20:FF:000005">
    <property type="entry name" value="Transcription termination/antitermination protein NusA"/>
    <property type="match status" value="1"/>
</dbReference>
<dbReference type="Gene3D" id="3.30.300.20">
    <property type="match status" value="2"/>
</dbReference>
<dbReference type="Gene3D" id="2.40.50.140">
    <property type="entry name" value="Nucleic acid-binding proteins"/>
    <property type="match status" value="1"/>
</dbReference>
<dbReference type="Gene3D" id="3.30.1480.10">
    <property type="entry name" value="NusA, N-terminal domain"/>
    <property type="match status" value="1"/>
</dbReference>
<dbReference type="HAMAP" id="MF_00945_B">
    <property type="entry name" value="NusA_B"/>
    <property type="match status" value="1"/>
</dbReference>
<dbReference type="InterPro" id="IPR004087">
    <property type="entry name" value="KH_dom"/>
</dbReference>
<dbReference type="InterPro" id="IPR015946">
    <property type="entry name" value="KH_dom-like_a/b"/>
</dbReference>
<dbReference type="InterPro" id="IPR025249">
    <property type="entry name" value="KH_dom_NusA-like"/>
</dbReference>
<dbReference type="InterPro" id="IPR009019">
    <property type="entry name" value="KH_sf_prok-type"/>
</dbReference>
<dbReference type="InterPro" id="IPR012340">
    <property type="entry name" value="NA-bd_OB-fold"/>
</dbReference>
<dbReference type="InterPro" id="IPR030842">
    <property type="entry name" value="NusA_bac"/>
</dbReference>
<dbReference type="InterPro" id="IPR036555">
    <property type="entry name" value="NusA_N_sf"/>
</dbReference>
<dbReference type="InterPro" id="IPR003029">
    <property type="entry name" value="S1_domain"/>
</dbReference>
<dbReference type="InterPro" id="IPR013735">
    <property type="entry name" value="TF_NusA_N"/>
</dbReference>
<dbReference type="InterPro" id="IPR010213">
    <property type="entry name" value="Tscrpt_termination_fac_NusA"/>
</dbReference>
<dbReference type="NCBIfam" id="TIGR01953">
    <property type="entry name" value="NusA"/>
    <property type="match status" value="1"/>
</dbReference>
<dbReference type="PANTHER" id="PTHR22648">
    <property type="entry name" value="TRANSCRIPTION TERMINATION FACTOR NUSA"/>
    <property type="match status" value="1"/>
</dbReference>
<dbReference type="PANTHER" id="PTHR22648:SF0">
    <property type="entry name" value="TRANSCRIPTION TERMINATION_ANTITERMINATION PROTEIN NUSA"/>
    <property type="match status" value="1"/>
</dbReference>
<dbReference type="Pfam" id="PF13184">
    <property type="entry name" value="KH_5"/>
    <property type="match status" value="1"/>
</dbReference>
<dbReference type="Pfam" id="PF08529">
    <property type="entry name" value="NusA_N"/>
    <property type="match status" value="1"/>
</dbReference>
<dbReference type="SMART" id="SM00322">
    <property type="entry name" value="KH"/>
    <property type="match status" value="2"/>
</dbReference>
<dbReference type="SMART" id="SM00316">
    <property type="entry name" value="S1"/>
    <property type="match status" value="1"/>
</dbReference>
<dbReference type="SUPFAM" id="SSF50249">
    <property type="entry name" value="Nucleic acid-binding proteins"/>
    <property type="match status" value="1"/>
</dbReference>
<dbReference type="SUPFAM" id="SSF54814">
    <property type="entry name" value="Prokaryotic type KH domain (KH-domain type II)"/>
    <property type="match status" value="2"/>
</dbReference>
<dbReference type="SUPFAM" id="SSF69705">
    <property type="entry name" value="Transcription factor NusA, N-terminal domain"/>
    <property type="match status" value="1"/>
</dbReference>
<dbReference type="PROSITE" id="PS50084">
    <property type="entry name" value="KH_TYPE_1"/>
    <property type="match status" value="1"/>
</dbReference>
<dbReference type="PROSITE" id="PS50126">
    <property type="entry name" value="S1"/>
    <property type="match status" value="1"/>
</dbReference>
<feature type="chain" id="PRO_0000181971" description="Transcription termination/antitermination protein NusA">
    <location>
        <begin position="1"/>
        <end position="531"/>
    </location>
</feature>
<feature type="domain" description="S1 motif" evidence="1">
    <location>
        <begin position="165"/>
        <end position="235"/>
    </location>
</feature>
<feature type="domain" description="KH" evidence="1">
    <location>
        <begin position="340"/>
        <end position="410"/>
    </location>
</feature>
<feature type="region of interest" description="Disordered" evidence="2">
    <location>
        <begin position="463"/>
        <end position="531"/>
    </location>
</feature>
<feature type="compositionally biased region" description="Basic and acidic residues" evidence="2">
    <location>
        <begin position="463"/>
        <end position="475"/>
    </location>
</feature>
<feature type="compositionally biased region" description="Basic residues" evidence="2">
    <location>
        <begin position="476"/>
        <end position="490"/>
    </location>
</feature>
<feature type="compositionally biased region" description="Basic and acidic residues" evidence="2">
    <location>
        <begin position="502"/>
        <end position="512"/>
    </location>
</feature>
<feature type="compositionally biased region" description="Polar residues" evidence="2">
    <location>
        <begin position="513"/>
        <end position="531"/>
    </location>
</feature>
<feature type="sequence conflict" description="In Ref. 2; AAD10598." evidence="3" ref="2">
    <original>PAV</original>
    <variation>ACSW</variation>
    <location>
        <begin position="278"/>
        <end position="280"/>
    </location>
</feature>
<accession>P47387</accession>
<accession>Q49227</accession>
<protein>
    <recommendedName>
        <fullName evidence="1">Transcription termination/antitermination protein NusA</fullName>
    </recommendedName>
</protein>
<evidence type="ECO:0000255" key="1">
    <source>
        <dbReference type="HAMAP-Rule" id="MF_00945"/>
    </source>
</evidence>
<evidence type="ECO:0000256" key="2">
    <source>
        <dbReference type="SAM" id="MobiDB-lite"/>
    </source>
</evidence>
<evidence type="ECO:0000305" key="3"/>
<comment type="function">
    <text evidence="1">Participates in both transcription termination and antitermination.</text>
</comment>
<comment type="subunit">
    <text evidence="1">Monomer. Binds directly to the core enzyme of the DNA-dependent RNA polymerase and to nascent RNA.</text>
</comment>
<comment type="subcellular location">
    <subcellularLocation>
        <location evidence="1">Cytoplasm</location>
    </subcellularLocation>
</comment>
<comment type="similarity">
    <text evidence="1">Belongs to the NusA family.</text>
</comment>
<name>NUSA_MYCGE</name>
<gene>
    <name evidence="1" type="primary">nusA</name>
    <name type="ordered locus">MG141</name>
</gene>
<reference key="1">
    <citation type="journal article" date="1995" name="Science">
        <title>The minimal gene complement of Mycoplasma genitalium.</title>
        <authorList>
            <person name="Fraser C.M."/>
            <person name="Gocayne J.D."/>
            <person name="White O."/>
            <person name="Adams M.D."/>
            <person name="Clayton R.A."/>
            <person name="Fleischmann R.D."/>
            <person name="Bult C.J."/>
            <person name="Kerlavage A.R."/>
            <person name="Sutton G.G."/>
            <person name="Kelley J.M."/>
            <person name="Fritchman J.L."/>
            <person name="Weidman J.F."/>
            <person name="Small K.V."/>
            <person name="Sandusky M."/>
            <person name="Fuhrmann J.L."/>
            <person name="Nguyen D.T."/>
            <person name="Utterback T.R."/>
            <person name="Saudek D.M."/>
            <person name="Phillips C.A."/>
            <person name="Merrick J.M."/>
            <person name="Tomb J.-F."/>
            <person name="Dougherty B.A."/>
            <person name="Bott K.F."/>
            <person name="Hu P.-C."/>
            <person name="Lucier T.S."/>
            <person name="Peterson S.N."/>
            <person name="Smith H.O."/>
            <person name="Hutchison C.A. III"/>
            <person name="Venter J.C."/>
        </authorList>
    </citation>
    <scope>NUCLEOTIDE SEQUENCE [LARGE SCALE GENOMIC DNA]</scope>
    <source>
        <strain>ATCC 33530 / DSM 19775 / NCTC 10195 / G37</strain>
    </source>
</reference>
<reference key="2">
    <citation type="journal article" date="1993" name="J. Bacteriol.">
        <title>A survey of the Mycoplasma genitalium genome by using random sequencing.</title>
        <authorList>
            <person name="Peterson S.N."/>
            <person name="Hu P.-C."/>
            <person name="Bott K.F."/>
            <person name="Hutchison C.A. III"/>
        </authorList>
    </citation>
    <scope>NUCLEOTIDE SEQUENCE [GENOMIC DNA] OF 75-291</scope>
    <source>
        <strain>ATCC 33530 / DSM 19775 / NCTC 10195 / G37</strain>
    </source>
</reference>
<proteinExistence type="inferred from homology"/>
<sequence>MKITFISGQEVSLGTSFLLFSKKIVMNELNQPLLAIIKNVAKTKNLSIEEVVFCLKTALEQAYKKHLNFVNVEVNINFDKGIINVEQLFNVVSDENEDYDDFLEIPLQAANKINSSLQLGDVLRKPIPLKNISSDLINKMIAIFNQKISETNFKAVMSEFSSEVGEVIEAKVEDIDTNKEGGLKGYIINLETTKGYISKRELSKGERLEIGKKYLFVIKEIQRQASLWPITLSRSDTRLLQFLLTSNTPEIENGTIVIKKIERSPGVKSKIAVISNDPAVDPVAAILGPKGEKIRGISEEFNGEIIDIVFWNEDKLKFLINAILPAEVIGYNILQDDERDTSIEVVVPANQIANVFGFKGVNIRLISNLTGWNSVDVYSEKDASEANIKFTRLSFEPEGLFGIKKRREKIISNDATDKVFYTSKDNVIDDEIIVDLAKDLMVDNKQKQPEQVAKQVVEKSQLEKQVTPKEKEKVQPKAKVHSNSHSKKPAKPNQIFSITVDASDKNLKKDQVDNNQTNPQTKQTFDSFDDL</sequence>
<organism>
    <name type="scientific">Mycoplasma genitalium (strain ATCC 33530 / DSM 19775 / NCTC 10195 / G37)</name>
    <name type="common">Mycoplasmoides genitalium</name>
    <dbReference type="NCBI Taxonomy" id="243273"/>
    <lineage>
        <taxon>Bacteria</taxon>
        <taxon>Bacillati</taxon>
        <taxon>Mycoplasmatota</taxon>
        <taxon>Mycoplasmoidales</taxon>
        <taxon>Mycoplasmoidaceae</taxon>
        <taxon>Mycoplasmoides</taxon>
    </lineage>
</organism>